<accession>Q2SBH1</accession>
<evidence type="ECO:0000255" key="1">
    <source>
        <dbReference type="HAMAP-Rule" id="MF_00528"/>
    </source>
</evidence>
<comment type="function">
    <text evidence="1">Nucleoside triphosphate pyrophosphatase that hydrolyzes dTTP and UTP. May have a dual role in cell division arrest and in preventing the incorporation of modified nucleotides into cellular nucleic acids.</text>
</comment>
<comment type="catalytic activity">
    <reaction evidence="1">
        <text>dTTP + H2O = dTMP + diphosphate + H(+)</text>
        <dbReference type="Rhea" id="RHEA:28534"/>
        <dbReference type="ChEBI" id="CHEBI:15377"/>
        <dbReference type="ChEBI" id="CHEBI:15378"/>
        <dbReference type="ChEBI" id="CHEBI:33019"/>
        <dbReference type="ChEBI" id="CHEBI:37568"/>
        <dbReference type="ChEBI" id="CHEBI:63528"/>
        <dbReference type="EC" id="3.6.1.9"/>
    </reaction>
</comment>
<comment type="catalytic activity">
    <reaction evidence="1">
        <text>UTP + H2O = UMP + diphosphate + H(+)</text>
        <dbReference type="Rhea" id="RHEA:29395"/>
        <dbReference type="ChEBI" id="CHEBI:15377"/>
        <dbReference type="ChEBI" id="CHEBI:15378"/>
        <dbReference type="ChEBI" id="CHEBI:33019"/>
        <dbReference type="ChEBI" id="CHEBI:46398"/>
        <dbReference type="ChEBI" id="CHEBI:57865"/>
        <dbReference type="EC" id="3.6.1.9"/>
    </reaction>
</comment>
<comment type="cofactor">
    <cofactor evidence="1">
        <name>a divalent metal cation</name>
        <dbReference type="ChEBI" id="CHEBI:60240"/>
    </cofactor>
</comment>
<comment type="subcellular location">
    <subcellularLocation>
        <location evidence="1">Cytoplasm</location>
    </subcellularLocation>
</comment>
<comment type="similarity">
    <text evidence="1">Belongs to the Maf family. YhdE subfamily.</text>
</comment>
<proteinExistence type="inferred from homology"/>
<feature type="chain" id="PRO_0000267319" description="dTTP/UTP pyrophosphatase">
    <location>
        <begin position="1"/>
        <end position="201"/>
    </location>
</feature>
<feature type="active site" description="Proton acceptor" evidence="1">
    <location>
        <position position="79"/>
    </location>
</feature>
<feature type="site" description="Important for substrate specificity" evidence="1">
    <location>
        <position position="19"/>
    </location>
</feature>
<feature type="site" description="Important for substrate specificity" evidence="1">
    <location>
        <position position="80"/>
    </location>
</feature>
<feature type="site" description="Important for substrate specificity" evidence="1">
    <location>
        <position position="162"/>
    </location>
</feature>
<sequence>MFDGNPGRRRLVLASGSPRRREMIAGLGCEFSIASADIDESVRPSEAAADYVERLAKEKATAVFEARGDQQDIVVLGADTTVVAGGDILGKPVDFDDAKAMLRRLSGTWHEVLTSVALVAAEGCKVTTTLSRVRFRELSEQEIQRYWDSGEPADKAGAYGIQGLAGSFVERVEGSYSSIVGLPLCETVVLLKEFGIKIWSD</sequence>
<dbReference type="EC" id="3.6.1.9" evidence="1"/>
<dbReference type="EMBL" id="CP000155">
    <property type="protein sequence ID" value="ABC32003.1"/>
    <property type="molecule type" value="Genomic_DNA"/>
</dbReference>
<dbReference type="RefSeq" id="WP_011399067.1">
    <property type="nucleotide sequence ID" value="NC_007645.1"/>
</dbReference>
<dbReference type="SMR" id="Q2SBH1"/>
<dbReference type="STRING" id="349521.HCH_05331"/>
<dbReference type="KEGG" id="hch:HCH_05331"/>
<dbReference type="eggNOG" id="COG0424">
    <property type="taxonomic scope" value="Bacteria"/>
</dbReference>
<dbReference type="HOGENOM" id="CLU_040416_2_1_6"/>
<dbReference type="OrthoDB" id="9807767at2"/>
<dbReference type="Proteomes" id="UP000000238">
    <property type="component" value="Chromosome"/>
</dbReference>
<dbReference type="GO" id="GO:0005737">
    <property type="term" value="C:cytoplasm"/>
    <property type="evidence" value="ECO:0007669"/>
    <property type="project" value="UniProtKB-SubCell"/>
</dbReference>
<dbReference type="GO" id="GO:0036218">
    <property type="term" value="F:dTTP diphosphatase activity"/>
    <property type="evidence" value="ECO:0007669"/>
    <property type="project" value="RHEA"/>
</dbReference>
<dbReference type="GO" id="GO:0036221">
    <property type="term" value="F:UTP diphosphatase activity"/>
    <property type="evidence" value="ECO:0007669"/>
    <property type="project" value="RHEA"/>
</dbReference>
<dbReference type="GO" id="GO:0009117">
    <property type="term" value="P:nucleotide metabolic process"/>
    <property type="evidence" value="ECO:0007669"/>
    <property type="project" value="UniProtKB-KW"/>
</dbReference>
<dbReference type="CDD" id="cd00555">
    <property type="entry name" value="Maf"/>
    <property type="match status" value="1"/>
</dbReference>
<dbReference type="FunFam" id="3.90.950.10:FF:000005">
    <property type="entry name" value="7-methyl-GTP pyrophosphatase"/>
    <property type="match status" value="1"/>
</dbReference>
<dbReference type="Gene3D" id="3.90.950.10">
    <property type="match status" value="1"/>
</dbReference>
<dbReference type="HAMAP" id="MF_00528">
    <property type="entry name" value="Maf"/>
    <property type="match status" value="1"/>
</dbReference>
<dbReference type="InterPro" id="IPR029001">
    <property type="entry name" value="ITPase-like_fam"/>
</dbReference>
<dbReference type="InterPro" id="IPR003697">
    <property type="entry name" value="Maf-like"/>
</dbReference>
<dbReference type="NCBIfam" id="TIGR00172">
    <property type="entry name" value="maf"/>
    <property type="match status" value="1"/>
</dbReference>
<dbReference type="PANTHER" id="PTHR43213">
    <property type="entry name" value="BIFUNCTIONAL DTTP/UTP PYROPHOSPHATASE/METHYLTRANSFERASE PROTEIN-RELATED"/>
    <property type="match status" value="1"/>
</dbReference>
<dbReference type="PANTHER" id="PTHR43213:SF5">
    <property type="entry name" value="BIFUNCTIONAL DTTP_UTP PYROPHOSPHATASE_METHYLTRANSFERASE PROTEIN-RELATED"/>
    <property type="match status" value="1"/>
</dbReference>
<dbReference type="Pfam" id="PF02545">
    <property type="entry name" value="Maf"/>
    <property type="match status" value="1"/>
</dbReference>
<dbReference type="PIRSF" id="PIRSF006305">
    <property type="entry name" value="Maf"/>
    <property type="match status" value="1"/>
</dbReference>
<dbReference type="SUPFAM" id="SSF52972">
    <property type="entry name" value="ITPase-like"/>
    <property type="match status" value="1"/>
</dbReference>
<name>NTPPA_HAHCH</name>
<reference key="1">
    <citation type="journal article" date="2005" name="Nucleic Acids Res.">
        <title>Genomic blueprint of Hahella chejuensis, a marine microbe producing an algicidal agent.</title>
        <authorList>
            <person name="Jeong H."/>
            <person name="Yim J.H."/>
            <person name="Lee C."/>
            <person name="Choi S.-H."/>
            <person name="Park Y.K."/>
            <person name="Yoon S.H."/>
            <person name="Hur C.-G."/>
            <person name="Kang H.-Y."/>
            <person name="Kim D."/>
            <person name="Lee H.H."/>
            <person name="Park K.H."/>
            <person name="Park S.-H."/>
            <person name="Park H.-S."/>
            <person name="Lee H.K."/>
            <person name="Oh T.K."/>
            <person name="Kim J.F."/>
        </authorList>
    </citation>
    <scope>NUCLEOTIDE SEQUENCE [LARGE SCALE GENOMIC DNA]</scope>
    <source>
        <strain>KCTC 2396</strain>
    </source>
</reference>
<organism>
    <name type="scientific">Hahella chejuensis (strain KCTC 2396)</name>
    <dbReference type="NCBI Taxonomy" id="349521"/>
    <lineage>
        <taxon>Bacteria</taxon>
        <taxon>Pseudomonadati</taxon>
        <taxon>Pseudomonadota</taxon>
        <taxon>Gammaproteobacteria</taxon>
        <taxon>Oceanospirillales</taxon>
        <taxon>Hahellaceae</taxon>
        <taxon>Hahella</taxon>
    </lineage>
</organism>
<keyword id="KW-0963">Cytoplasm</keyword>
<keyword id="KW-0378">Hydrolase</keyword>
<keyword id="KW-0546">Nucleotide metabolism</keyword>
<keyword id="KW-1185">Reference proteome</keyword>
<gene>
    <name type="ordered locus">HCH_05331</name>
</gene>
<protein>
    <recommendedName>
        <fullName evidence="1">dTTP/UTP pyrophosphatase</fullName>
        <shortName evidence="1">dTTPase/UTPase</shortName>
        <ecNumber evidence="1">3.6.1.9</ecNumber>
    </recommendedName>
    <alternativeName>
        <fullName evidence="1">Nucleoside triphosphate pyrophosphatase</fullName>
    </alternativeName>
    <alternativeName>
        <fullName evidence="1">Nucleotide pyrophosphatase</fullName>
        <shortName evidence="1">Nucleotide PPase</shortName>
    </alternativeName>
</protein>